<comment type="function">
    <text evidence="1">Part of the Rad50/Mre11 complex, which is involved in the early steps of DNA double-strand break (DSB) repair. The complex may facilitate opening of the processed DNA ends to aid in the recruitment of HerA and NurA. Mre11 binds to DSB ends and has both double-stranded 3'-5' exonuclease activity and single-stranded endonuclease activity.</text>
</comment>
<comment type="cofactor">
    <cofactor evidence="1">
        <name>Mn(2+)</name>
        <dbReference type="ChEBI" id="CHEBI:29035"/>
    </cofactor>
    <text evidence="1">Binds 2 manganese ions per subunit.</text>
</comment>
<comment type="activity regulation">
    <text evidence="1">Nuclease activity is regulated by Rad50.</text>
</comment>
<comment type="subunit">
    <text evidence="1">Homodimer. Forms a heterotetramer composed of two Mre11 subunits and two Rad50 subunits.</text>
</comment>
<comment type="similarity">
    <text evidence="1">Belongs to the MRE11/RAD32 family.</text>
</comment>
<comment type="sequence caution" evidence="2">
    <conflict type="erroneous initiation">
        <sequence resource="EMBL-CDS" id="CAB50130"/>
    </conflict>
    <text>Extended N-terminus.</text>
</comment>
<sequence length="415" mass="48079">MGIKFAHLADVHLGYEQFNRSQRAEEFAKAFEDAIKICVDEKVDFIVIAGDLFNSSRPSPGTIKTAVKILQIPRDNNIPVFAIEGNHDRTQRGPSILHLLEDLGLLYVLGVRDEKVENEYLTSEKTKAGWLVKGMYKDVEIHGMKYMSAAWFEGNIELFKSMFRPEGDAILVLHQGVREITENNYPNYSSELSLSDLPKGYLYYALGHIHKRFELTYDDAPVVYPGSLERWDFGDYSLKLTWNGFQFKEEVGVDKGFYIVEDFKPRFIRINARDFIDVHIKGHSENEIKKAVKLAVPKIPRNSYVRFNIRWKRPVDVDWIKSIVNAEYVRVNPIIIKEERGPDGKDLDVKKFFTELEWKIIELASEKEYEYYLNQIIDLLASEEGKVEAKIDAKREEKKFVRPKNPGDIMAWVKG</sequence>
<protein>
    <recommendedName>
        <fullName evidence="1">DNA double-strand break repair protein Mre11</fullName>
        <ecNumber evidence="1">3.1.-.-</ecNumber>
    </recommendedName>
</protein>
<reference key="1">
    <citation type="journal article" date="2003" name="Mol. Microbiol.">
        <title>An integrated analysis of the genome of the hyperthermophilic archaeon Pyrococcus abyssi.</title>
        <authorList>
            <person name="Cohen G.N."/>
            <person name="Barbe V."/>
            <person name="Flament D."/>
            <person name="Galperin M."/>
            <person name="Heilig R."/>
            <person name="Lecompte O."/>
            <person name="Poch O."/>
            <person name="Prieur D."/>
            <person name="Querellou J."/>
            <person name="Ripp R."/>
            <person name="Thierry J.-C."/>
            <person name="Van der Oost J."/>
            <person name="Weissenbach J."/>
            <person name="Zivanovic Y."/>
            <person name="Forterre P."/>
        </authorList>
    </citation>
    <scope>NUCLEOTIDE SEQUENCE [LARGE SCALE GENOMIC DNA]</scope>
    <source>
        <strain>GE5 / Orsay</strain>
    </source>
</reference>
<reference key="2">
    <citation type="journal article" date="2012" name="Curr. Microbiol.">
        <title>Re-annotation of two hyperthermophilic archaea Pyrococcus abyssi GE5 and Pyrococcus furiosus DSM 3638.</title>
        <authorList>
            <person name="Gao J."/>
            <person name="Wang J."/>
        </authorList>
    </citation>
    <scope>GENOME REANNOTATION</scope>
    <source>
        <strain>GE5 / Orsay</strain>
    </source>
</reference>
<dbReference type="EC" id="3.1.-.-" evidence="1"/>
<dbReference type="EMBL" id="AJ248286">
    <property type="protein sequence ID" value="CAB50130.1"/>
    <property type="status" value="ALT_INIT"/>
    <property type="molecule type" value="Genomic_DNA"/>
</dbReference>
<dbReference type="EMBL" id="HE613800">
    <property type="protein sequence ID" value="CCE70655.1"/>
    <property type="molecule type" value="Genomic_DNA"/>
</dbReference>
<dbReference type="PIR" id="E75103">
    <property type="entry name" value="E75103"/>
</dbReference>
<dbReference type="RefSeq" id="WP_048146911.1">
    <property type="nucleotide sequence ID" value="NC_000868.1"/>
</dbReference>
<dbReference type="SMR" id="Q9UZC9"/>
<dbReference type="STRING" id="272844.PAB0811"/>
<dbReference type="KEGG" id="pab:PAB0811"/>
<dbReference type="PATRIC" id="fig|272844.11.peg.1299"/>
<dbReference type="eggNOG" id="arCOG00397">
    <property type="taxonomic scope" value="Archaea"/>
</dbReference>
<dbReference type="HOGENOM" id="CLU_038682_0_0_2"/>
<dbReference type="Proteomes" id="UP000000810">
    <property type="component" value="Chromosome"/>
</dbReference>
<dbReference type="Proteomes" id="UP000009139">
    <property type="component" value="Chromosome"/>
</dbReference>
<dbReference type="GO" id="GO:0008408">
    <property type="term" value="F:3'-5' exonuclease activity"/>
    <property type="evidence" value="ECO:0007669"/>
    <property type="project" value="UniProtKB-UniRule"/>
</dbReference>
<dbReference type="GO" id="GO:0045027">
    <property type="term" value="F:DNA end binding"/>
    <property type="evidence" value="ECO:0007669"/>
    <property type="project" value="UniProtKB-UniRule"/>
</dbReference>
<dbReference type="GO" id="GO:0004519">
    <property type="term" value="F:endonuclease activity"/>
    <property type="evidence" value="ECO:0007669"/>
    <property type="project" value="UniProtKB-UniRule"/>
</dbReference>
<dbReference type="GO" id="GO:0030145">
    <property type="term" value="F:manganese ion binding"/>
    <property type="evidence" value="ECO:0007669"/>
    <property type="project" value="UniProtKB-UniRule"/>
</dbReference>
<dbReference type="GO" id="GO:0000403">
    <property type="term" value="F:Y-form DNA binding"/>
    <property type="evidence" value="ECO:0007669"/>
    <property type="project" value="UniProtKB-UniRule"/>
</dbReference>
<dbReference type="GO" id="GO:0000729">
    <property type="term" value="P:DNA double-strand break processing"/>
    <property type="evidence" value="ECO:0007669"/>
    <property type="project" value="InterPro"/>
</dbReference>
<dbReference type="CDD" id="cd00840">
    <property type="entry name" value="MPP_Mre11_N"/>
    <property type="match status" value="1"/>
</dbReference>
<dbReference type="Gene3D" id="3.60.21.10">
    <property type="match status" value="1"/>
</dbReference>
<dbReference type="Gene3D" id="3.30.110.80">
    <property type="entry name" value="DNA double-strand break repair nuclease"/>
    <property type="match status" value="1"/>
</dbReference>
<dbReference type="HAMAP" id="MF_02044">
    <property type="entry name" value="Mre11"/>
    <property type="match status" value="1"/>
</dbReference>
<dbReference type="InterPro" id="IPR004843">
    <property type="entry name" value="Calcineurin-like_PHP_ApaH"/>
</dbReference>
<dbReference type="InterPro" id="IPR050535">
    <property type="entry name" value="DNA_Repair-Maintenance_Comp"/>
</dbReference>
<dbReference type="InterPro" id="IPR029052">
    <property type="entry name" value="Metallo-depent_PP-like"/>
</dbReference>
<dbReference type="InterPro" id="IPR032885">
    <property type="entry name" value="Mre11_archaea-type"/>
</dbReference>
<dbReference type="InterPro" id="IPR054741">
    <property type="entry name" value="Mre11_dom"/>
</dbReference>
<dbReference type="InterPro" id="IPR041796">
    <property type="entry name" value="Mre11_N"/>
</dbReference>
<dbReference type="InterPro" id="IPR054745">
    <property type="entry name" value="Mre11_thermococcales"/>
</dbReference>
<dbReference type="NCBIfam" id="NF041029">
    <property type="entry name" value="Mre11_Pyroc"/>
    <property type="match status" value="1"/>
</dbReference>
<dbReference type="PANTHER" id="PTHR30337">
    <property type="entry name" value="COMPONENT OF ATP-DEPENDENT DSDNA EXONUCLEASE"/>
    <property type="match status" value="1"/>
</dbReference>
<dbReference type="PANTHER" id="PTHR30337:SF0">
    <property type="entry name" value="NUCLEASE SBCCD SUBUNIT D"/>
    <property type="match status" value="1"/>
</dbReference>
<dbReference type="Pfam" id="PF00149">
    <property type="entry name" value="Metallophos"/>
    <property type="match status" value="1"/>
</dbReference>
<dbReference type="Pfam" id="PF22411">
    <property type="entry name" value="Mre11_2nd"/>
    <property type="match status" value="1"/>
</dbReference>
<dbReference type="SUPFAM" id="SSF56300">
    <property type="entry name" value="Metallo-dependent phosphatases"/>
    <property type="match status" value="1"/>
</dbReference>
<name>MRE11_PYRAB</name>
<evidence type="ECO:0000255" key="1">
    <source>
        <dbReference type="HAMAP-Rule" id="MF_02044"/>
    </source>
</evidence>
<evidence type="ECO:0000305" key="2"/>
<gene>
    <name evidence="1" type="primary">mre11</name>
    <name type="synonym">rad32</name>
    <name type="ordered locus">PYRAB12190</name>
    <name type="ORF">PAB0811</name>
</gene>
<feature type="chain" id="PRO_0000138695" description="DNA double-strand break repair protein Mre11">
    <location>
        <begin position="1"/>
        <end position="415"/>
    </location>
</feature>
<feature type="active site" description="Proton donor" evidence="1">
    <location>
        <position position="87"/>
    </location>
</feature>
<feature type="binding site" evidence="1">
    <location>
        <position position="10"/>
    </location>
    <ligand>
        <name>Mn(2+)</name>
        <dbReference type="ChEBI" id="CHEBI:29035"/>
        <label>1</label>
    </ligand>
</feature>
<feature type="binding site" evidence="1">
    <location>
        <position position="12"/>
    </location>
    <ligand>
        <name>Mn(2+)</name>
        <dbReference type="ChEBI" id="CHEBI:29035"/>
        <label>1</label>
    </ligand>
</feature>
<feature type="binding site" evidence="1">
    <location>
        <position position="51"/>
    </location>
    <ligand>
        <name>Mn(2+)</name>
        <dbReference type="ChEBI" id="CHEBI:29035"/>
        <label>1</label>
    </ligand>
</feature>
<feature type="binding site" evidence="1">
    <location>
        <position position="51"/>
    </location>
    <ligand>
        <name>Mn(2+)</name>
        <dbReference type="ChEBI" id="CHEBI:29035"/>
        <label>2</label>
    </ligand>
</feature>
<feature type="binding site" evidence="1">
    <location>
        <position position="86"/>
    </location>
    <ligand>
        <name>Mn(2+)</name>
        <dbReference type="ChEBI" id="CHEBI:29035"/>
        <label>2</label>
    </ligand>
</feature>
<feature type="binding site" evidence="1">
    <location>
        <position position="174"/>
    </location>
    <ligand>
        <name>Mn(2+)</name>
        <dbReference type="ChEBI" id="CHEBI:29035"/>
        <label>2</label>
    </ligand>
</feature>
<feature type="binding site" evidence="1">
    <location>
        <position position="208"/>
    </location>
    <ligand>
        <name>Mn(2+)</name>
        <dbReference type="ChEBI" id="CHEBI:29035"/>
        <label>2</label>
    </ligand>
</feature>
<feature type="binding site" evidence="1">
    <location>
        <position position="210"/>
    </location>
    <ligand>
        <name>Mn(2+)</name>
        <dbReference type="ChEBI" id="CHEBI:29035"/>
        <label>1</label>
    </ligand>
</feature>
<organism>
    <name type="scientific">Pyrococcus abyssi (strain GE5 / Orsay)</name>
    <dbReference type="NCBI Taxonomy" id="272844"/>
    <lineage>
        <taxon>Archaea</taxon>
        <taxon>Methanobacteriati</taxon>
        <taxon>Methanobacteriota</taxon>
        <taxon>Thermococci</taxon>
        <taxon>Thermococcales</taxon>
        <taxon>Thermococcaceae</taxon>
        <taxon>Pyrococcus</taxon>
    </lineage>
</organism>
<accession>Q9UZC9</accession>
<accession>G8ZKL2</accession>
<proteinExistence type="inferred from homology"/>
<keyword id="KW-0227">DNA damage</keyword>
<keyword id="KW-0234">DNA repair</keyword>
<keyword id="KW-0255">Endonuclease</keyword>
<keyword id="KW-0269">Exonuclease</keyword>
<keyword id="KW-0378">Hydrolase</keyword>
<keyword id="KW-0464">Manganese</keyword>
<keyword id="KW-0479">Metal-binding</keyword>
<keyword id="KW-0540">Nuclease</keyword>